<name>SZRD1_BOVIN</name>
<dbReference type="EMBL" id="BC112817">
    <property type="protein sequence ID" value="AAI12818.1"/>
    <property type="molecule type" value="mRNA"/>
</dbReference>
<dbReference type="EMBL" id="EH204951">
    <property type="status" value="NOT_ANNOTATED_CDS"/>
    <property type="molecule type" value="mRNA"/>
</dbReference>
<dbReference type="RefSeq" id="NP_001108080.1">
    <molecule id="Q2KI04-1"/>
    <property type="nucleotide sequence ID" value="NM_001114608.2"/>
</dbReference>
<dbReference type="FunCoup" id="Q2KI04">
    <property type="interactions" value="2628"/>
</dbReference>
<dbReference type="STRING" id="9913.ENSBTAP00000037586"/>
<dbReference type="PaxDb" id="9913-ENSBTAP00000037586"/>
<dbReference type="GeneID" id="512452"/>
<dbReference type="KEGG" id="bta:512452"/>
<dbReference type="CTD" id="26099"/>
<dbReference type="VEuPathDB" id="HostDB:ENSBTAG00000009251"/>
<dbReference type="eggNOG" id="ENOG502RZH5">
    <property type="taxonomic scope" value="Eukaryota"/>
</dbReference>
<dbReference type="HOGENOM" id="CLU_120658_0_0_1"/>
<dbReference type="InParanoid" id="Q2KI04"/>
<dbReference type="OMA" id="PACMSVQ"/>
<dbReference type="OrthoDB" id="5373615at2759"/>
<dbReference type="TreeFam" id="TF324643"/>
<dbReference type="Proteomes" id="UP000009136">
    <property type="component" value="Chromosome 2"/>
</dbReference>
<dbReference type="Bgee" id="ENSBTAG00000009251">
    <property type="expression patterns" value="Expressed in longissimus muscle and 108 other cell types or tissues"/>
</dbReference>
<dbReference type="InterPro" id="IPR024771">
    <property type="entry name" value="SUZ"/>
</dbReference>
<dbReference type="InterPro" id="IPR024642">
    <property type="entry name" value="SUZ-C"/>
</dbReference>
<dbReference type="InterPro" id="IPR039228">
    <property type="entry name" value="SZRD1"/>
</dbReference>
<dbReference type="PANTHER" id="PTHR31796">
    <property type="entry name" value="SUZ DOMAIN-CONTAINING PROTEIN 1"/>
    <property type="match status" value="1"/>
</dbReference>
<dbReference type="PANTHER" id="PTHR31796:SF2">
    <property type="entry name" value="SUZ DOMAIN-CONTAINING PROTEIN 1"/>
    <property type="match status" value="1"/>
</dbReference>
<dbReference type="Pfam" id="PF12752">
    <property type="entry name" value="SUZ"/>
    <property type="match status" value="1"/>
</dbReference>
<dbReference type="Pfam" id="PF12901">
    <property type="entry name" value="SUZ-C"/>
    <property type="match status" value="1"/>
</dbReference>
<dbReference type="PROSITE" id="PS51673">
    <property type="entry name" value="SUZ"/>
    <property type="match status" value="1"/>
</dbReference>
<dbReference type="PROSITE" id="PS51938">
    <property type="entry name" value="SUZ_C"/>
    <property type="match status" value="1"/>
</dbReference>
<proteinExistence type="evidence at transcript level"/>
<comment type="alternative products">
    <event type="alternative splicing"/>
    <isoform>
        <id>Q2KI04-1</id>
        <name>1</name>
        <sequence type="displayed"/>
    </isoform>
    <isoform>
        <id>Q2KI04-2</id>
        <name>2</name>
        <sequence type="described" ref="VSP_027994"/>
    </isoform>
</comment>
<comment type="similarity">
    <text evidence="6">Belongs to the SZRD1 family.</text>
</comment>
<feature type="chain" id="PRO_0000303067" description="SUZ RNA-binding domain-containing">
    <location>
        <begin position="1"/>
        <end position="152"/>
    </location>
</feature>
<feature type="domain" description="SUZ" evidence="2">
    <location>
        <begin position="42"/>
        <end position="107"/>
    </location>
</feature>
<feature type="domain" description="SUZ-C" evidence="3">
    <location>
        <begin position="111"/>
        <end position="152"/>
    </location>
</feature>
<feature type="region of interest" description="Disordered" evidence="4">
    <location>
        <begin position="30"/>
        <end position="86"/>
    </location>
</feature>
<feature type="region of interest" description="Disordered" evidence="4">
    <location>
        <begin position="99"/>
        <end position="152"/>
    </location>
</feature>
<feature type="compositionally biased region" description="Polar residues" evidence="4">
    <location>
        <begin position="66"/>
        <end position="79"/>
    </location>
</feature>
<feature type="compositionally biased region" description="Basic and acidic residues" evidence="4">
    <location>
        <begin position="113"/>
        <end position="130"/>
    </location>
</feature>
<feature type="modified residue" description="N-acetylmethionine" evidence="1">
    <location>
        <position position="1"/>
    </location>
</feature>
<feature type="modified residue" description="Phosphoserine" evidence="1">
    <location>
        <position position="37"/>
    </location>
</feature>
<feature type="modified residue" description="Phosphoserine" evidence="1">
    <location>
        <position position="39"/>
    </location>
</feature>
<feature type="modified residue" description="Phosphoserine" evidence="1">
    <location>
        <position position="51"/>
    </location>
</feature>
<feature type="modified residue" description="Phosphoserine" evidence="1">
    <location>
        <position position="105"/>
    </location>
</feature>
<feature type="modified residue" description="Phosphoserine" evidence="1">
    <location>
        <position position="107"/>
    </location>
</feature>
<feature type="splice variant" id="VSP_027994" description="In isoform 2." evidence="5">
    <original>MEDEEVAESWEEAADSGEIDRRLEKKLKITQKESR</original>
    <variation>MRRSLKAGRRRQTAG</variation>
    <location>
        <begin position="1"/>
        <end position="35"/>
    </location>
</feature>
<reference key="1">
    <citation type="submission" date="2006-01" db="EMBL/GenBank/DDBJ databases">
        <authorList>
            <consortium name="NIH - Mammalian Gene Collection (MGC) project"/>
        </authorList>
    </citation>
    <scope>NUCLEOTIDE SEQUENCE [LARGE SCALE MRNA] (ISOFORMS 1 AND 2)</scope>
    <source>
        <strain>Hereford</strain>
        <tissue>Fetal pancreas</tissue>
        <tissue>Heart ventricle</tissue>
    </source>
</reference>
<gene>
    <name type="primary">SZRD1</name>
</gene>
<protein>
    <recommendedName>
        <fullName>SUZ RNA-binding domain-containing</fullName>
        <shortName>SUZ domain-containing protein 1</shortName>
    </recommendedName>
</protein>
<keyword id="KW-0007">Acetylation</keyword>
<keyword id="KW-0025">Alternative splicing</keyword>
<keyword id="KW-0597">Phosphoprotein</keyword>
<keyword id="KW-1185">Reference proteome</keyword>
<sequence>MEDEEVAESWEEAADSGEIDRRLEKKLKITQKESRKSKSPPKVPIVIQDDSLPAGPPPQIRILKRPTSNGVVSGPNSASRPALPVKSLAQREAEYAEARKRILGSASPEEEQEKPILDRPTRISQPEDSRQPNNVIRQPLGPDGSQGFKQRR</sequence>
<accession>Q2KI04</accession>
<organism>
    <name type="scientific">Bos taurus</name>
    <name type="common">Bovine</name>
    <dbReference type="NCBI Taxonomy" id="9913"/>
    <lineage>
        <taxon>Eukaryota</taxon>
        <taxon>Metazoa</taxon>
        <taxon>Chordata</taxon>
        <taxon>Craniata</taxon>
        <taxon>Vertebrata</taxon>
        <taxon>Euteleostomi</taxon>
        <taxon>Mammalia</taxon>
        <taxon>Eutheria</taxon>
        <taxon>Laurasiatheria</taxon>
        <taxon>Artiodactyla</taxon>
        <taxon>Ruminantia</taxon>
        <taxon>Pecora</taxon>
        <taxon>Bovidae</taxon>
        <taxon>Bovinae</taxon>
        <taxon>Bos</taxon>
    </lineage>
</organism>
<evidence type="ECO:0000250" key="1">
    <source>
        <dbReference type="UniProtKB" id="Q7Z422"/>
    </source>
</evidence>
<evidence type="ECO:0000255" key="2">
    <source>
        <dbReference type="PROSITE-ProRule" id="PRU01009"/>
    </source>
</evidence>
<evidence type="ECO:0000255" key="3">
    <source>
        <dbReference type="PROSITE-ProRule" id="PRU01287"/>
    </source>
</evidence>
<evidence type="ECO:0000256" key="4">
    <source>
        <dbReference type="SAM" id="MobiDB-lite"/>
    </source>
</evidence>
<evidence type="ECO:0000303" key="5">
    <source ref="1"/>
</evidence>
<evidence type="ECO:0000305" key="6"/>